<evidence type="ECO:0000305" key="1"/>
<gene>
    <name type="ORF">TEgg108c21.1</name>
</gene>
<comment type="similarity">
    <text evidence="1">Belongs to the UPF0449 family.</text>
</comment>
<reference key="1">
    <citation type="submission" date="2006-10" db="EMBL/GenBank/DDBJ databases">
        <authorList>
            <consortium name="Sanger Xenopus tropicalis EST/cDNA project"/>
        </authorList>
    </citation>
    <scope>NUCLEOTIDE SEQUENCE [LARGE SCALE MRNA]</scope>
    <source>
        <tissue>Egg</tissue>
    </source>
</reference>
<keyword id="KW-1185">Reference proteome</keyword>
<dbReference type="EMBL" id="CR942492">
    <property type="protein sequence ID" value="CAJ82336.1"/>
    <property type="molecule type" value="mRNA"/>
</dbReference>
<dbReference type="SMR" id="Q28C26"/>
<dbReference type="FunCoup" id="Q28C26">
    <property type="interactions" value="562"/>
</dbReference>
<dbReference type="PaxDb" id="8364-ENSXETP00000038150"/>
<dbReference type="KEGG" id="xtr:733955"/>
<dbReference type="CTD" id="118387867"/>
<dbReference type="eggNOG" id="ENOG502SDTN">
    <property type="taxonomic scope" value="Eukaryota"/>
</dbReference>
<dbReference type="HOGENOM" id="CLU_141103_1_0_1"/>
<dbReference type="InParanoid" id="Q28C26"/>
<dbReference type="OMA" id="RFQQCRR"/>
<dbReference type="OrthoDB" id="6129359at2759"/>
<dbReference type="PhylomeDB" id="Q28C26"/>
<dbReference type="TreeFam" id="TF330719"/>
<dbReference type="Proteomes" id="UP000008143">
    <property type="component" value="Chromosome 1"/>
</dbReference>
<dbReference type="Bgee" id="ENSXETG00000026847">
    <property type="expression patterns" value="Expressed in liver and 14 other cell types or tissues"/>
</dbReference>
<dbReference type="InterPro" id="IPR028227">
    <property type="entry name" value="UPF0449"/>
</dbReference>
<dbReference type="PANTHER" id="PTHR34766">
    <property type="entry name" value="UPF0449 PROTEIN C19ORF25"/>
    <property type="match status" value="1"/>
</dbReference>
<dbReference type="PANTHER" id="PTHR34766:SF1">
    <property type="entry name" value="UPF0449 PROTEIN C19ORF25"/>
    <property type="match status" value="1"/>
</dbReference>
<dbReference type="Pfam" id="PF15136">
    <property type="entry name" value="UPF0449"/>
    <property type="match status" value="1"/>
</dbReference>
<proteinExistence type="inferred from homology"/>
<feature type="chain" id="PRO_0000294127" description="UPF0449 protein C19orf25 homolog">
    <location>
        <begin position="1"/>
        <end position="106"/>
    </location>
</feature>
<accession>Q28C26</accession>
<protein>
    <recommendedName>
        <fullName>UPF0449 protein C19orf25 homolog</fullName>
    </recommendedName>
</protein>
<sequence>MTSRAKKRIVLPTRPEPPSIEQILQDVHGAIASDPVFICDFSDDSSLSNNATLCEKEKQYWQSCNYVDMNNKLKEALIQLKAKCDVLRSAGEKLEEDIENLREATM</sequence>
<name>CS025_XENTR</name>
<organism>
    <name type="scientific">Xenopus tropicalis</name>
    <name type="common">Western clawed frog</name>
    <name type="synonym">Silurana tropicalis</name>
    <dbReference type="NCBI Taxonomy" id="8364"/>
    <lineage>
        <taxon>Eukaryota</taxon>
        <taxon>Metazoa</taxon>
        <taxon>Chordata</taxon>
        <taxon>Craniata</taxon>
        <taxon>Vertebrata</taxon>
        <taxon>Euteleostomi</taxon>
        <taxon>Amphibia</taxon>
        <taxon>Batrachia</taxon>
        <taxon>Anura</taxon>
        <taxon>Pipoidea</taxon>
        <taxon>Pipidae</taxon>
        <taxon>Xenopodinae</taxon>
        <taxon>Xenopus</taxon>
        <taxon>Silurana</taxon>
    </lineage>
</organism>